<gene>
    <name type="primary">Prox1</name>
</gene>
<accession>P48437</accession>
<accession>O88478</accession>
<accession>Q3UPV1</accession>
<accession>Q543D8</accession>
<name>PROX1_MOUSE</name>
<reference key="1">
    <citation type="journal article" date="1998" name="Biochem. Biophys. Res. Commun.">
        <title>Characterization of the mouse Prox1 gene.</title>
        <authorList>
            <person name="Tomarev S.I."/>
            <person name="Zinovieva R.D."/>
            <person name="Chang B."/>
            <person name="Hawes N.L."/>
        </authorList>
    </citation>
    <scope>NUCLEOTIDE SEQUENCE [MRNA]</scope>
    <scope>TISSUE SPECIFICITY</scope>
</reference>
<reference key="2">
    <citation type="journal article" date="2005" name="Science">
        <title>The transcriptional landscape of the mammalian genome.</title>
        <authorList>
            <person name="Carninci P."/>
            <person name="Kasukawa T."/>
            <person name="Katayama S."/>
            <person name="Gough J."/>
            <person name="Frith M.C."/>
            <person name="Maeda N."/>
            <person name="Oyama R."/>
            <person name="Ravasi T."/>
            <person name="Lenhard B."/>
            <person name="Wells C."/>
            <person name="Kodzius R."/>
            <person name="Shimokawa K."/>
            <person name="Bajic V.B."/>
            <person name="Brenner S.E."/>
            <person name="Batalov S."/>
            <person name="Forrest A.R."/>
            <person name="Zavolan M."/>
            <person name="Davis M.J."/>
            <person name="Wilming L.G."/>
            <person name="Aidinis V."/>
            <person name="Allen J.E."/>
            <person name="Ambesi-Impiombato A."/>
            <person name="Apweiler R."/>
            <person name="Aturaliya R.N."/>
            <person name="Bailey T.L."/>
            <person name="Bansal M."/>
            <person name="Baxter L."/>
            <person name="Beisel K.W."/>
            <person name="Bersano T."/>
            <person name="Bono H."/>
            <person name="Chalk A.M."/>
            <person name="Chiu K.P."/>
            <person name="Choudhary V."/>
            <person name="Christoffels A."/>
            <person name="Clutterbuck D.R."/>
            <person name="Crowe M.L."/>
            <person name="Dalla E."/>
            <person name="Dalrymple B.P."/>
            <person name="de Bono B."/>
            <person name="Della Gatta G."/>
            <person name="di Bernardo D."/>
            <person name="Down T."/>
            <person name="Engstrom P."/>
            <person name="Fagiolini M."/>
            <person name="Faulkner G."/>
            <person name="Fletcher C.F."/>
            <person name="Fukushima T."/>
            <person name="Furuno M."/>
            <person name="Futaki S."/>
            <person name="Gariboldi M."/>
            <person name="Georgii-Hemming P."/>
            <person name="Gingeras T.R."/>
            <person name="Gojobori T."/>
            <person name="Green R.E."/>
            <person name="Gustincich S."/>
            <person name="Harbers M."/>
            <person name="Hayashi Y."/>
            <person name="Hensch T.K."/>
            <person name="Hirokawa N."/>
            <person name="Hill D."/>
            <person name="Huminiecki L."/>
            <person name="Iacono M."/>
            <person name="Ikeo K."/>
            <person name="Iwama A."/>
            <person name="Ishikawa T."/>
            <person name="Jakt M."/>
            <person name="Kanapin A."/>
            <person name="Katoh M."/>
            <person name="Kawasawa Y."/>
            <person name="Kelso J."/>
            <person name="Kitamura H."/>
            <person name="Kitano H."/>
            <person name="Kollias G."/>
            <person name="Krishnan S.P."/>
            <person name="Kruger A."/>
            <person name="Kummerfeld S.K."/>
            <person name="Kurochkin I.V."/>
            <person name="Lareau L.F."/>
            <person name="Lazarevic D."/>
            <person name="Lipovich L."/>
            <person name="Liu J."/>
            <person name="Liuni S."/>
            <person name="McWilliam S."/>
            <person name="Madan Babu M."/>
            <person name="Madera M."/>
            <person name="Marchionni L."/>
            <person name="Matsuda H."/>
            <person name="Matsuzawa S."/>
            <person name="Miki H."/>
            <person name="Mignone F."/>
            <person name="Miyake S."/>
            <person name="Morris K."/>
            <person name="Mottagui-Tabar S."/>
            <person name="Mulder N."/>
            <person name="Nakano N."/>
            <person name="Nakauchi H."/>
            <person name="Ng P."/>
            <person name="Nilsson R."/>
            <person name="Nishiguchi S."/>
            <person name="Nishikawa S."/>
            <person name="Nori F."/>
            <person name="Ohara O."/>
            <person name="Okazaki Y."/>
            <person name="Orlando V."/>
            <person name="Pang K.C."/>
            <person name="Pavan W.J."/>
            <person name="Pavesi G."/>
            <person name="Pesole G."/>
            <person name="Petrovsky N."/>
            <person name="Piazza S."/>
            <person name="Reed J."/>
            <person name="Reid J.F."/>
            <person name="Ring B.Z."/>
            <person name="Ringwald M."/>
            <person name="Rost B."/>
            <person name="Ruan Y."/>
            <person name="Salzberg S.L."/>
            <person name="Sandelin A."/>
            <person name="Schneider C."/>
            <person name="Schoenbach C."/>
            <person name="Sekiguchi K."/>
            <person name="Semple C.A."/>
            <person name="Seno S."/>
            <person name="Sessa L."/>
            <person name="Sheng Y."/>
            <person name="Shibata Y."/>
            <person name="Shimada H."/>
            <person name="Shimada K."/>
            <person name="Silva D."/>
            <person name="Sinclair B."/>
            <person name="Sperling S."/>
            <person name="Stupka E."/>
            <person name="Sugiura K."/>
            <person name="Sultana R."/>
            <person name="Takenaka Y."/>
            <person name="Taki K."/>
            <person name="Tammoja K."/>
            <person name="Tan S.L."/>
            <person name="Tang S."/>
            <person name="Taylor M.S."/>
            <person name="Tegner J."/>
            <person name="Teichmann S.A."/>
            <person name="Ueda H.R."/>
            <person name="van Nimwegen E."/>
            <person name="Verardo R."/>
            <person name="Wei C.L."/>
            <person name="Yagi K."/>
            <person name="Yamanishi H."/>
            <person name="Zabarovsky E."/>
            <person name="Zhu S."/>
            <person name="Zimmer A."/>
            <person name="Hide W."/>
            <person name="Bult C."/>
            <person name="Grimmond S.M."/>
            <person name="Teasdale R.D."/>
            <person name="Liu E.T."/>
            <person name="Brusic V."/>
            <person name="Quackenbush J."/>
            <person name="Wahlestedt C."/>
            <person name="Mattick J.S."/>
            <person name="Hume D.A."/>
            <person name="Kai C."/>
            <person name="Sasaki D."/>
            <person name="Tomaru Y."/>
            <person name="Fukuda S."/>
            <person name="Kanamori-Katayama M."/>
            <person name="Suzuki M."/>
            <person name="Aoki J."/>
            <person name="Arakawa T."/>
            <person name="Iida J."/>
            <person name="Imamura K."/>
            <person name="Itoh M."/>
            <person name="Kato T."/>
            <person name="Kawaji H."/>
            <person name="Kawagashira N."/>
            <person name="Kawashima T."/>
            <person name="Kojima M."/>
            <person name="Kondo S."/>
            <person name="Konno H."/>
            <person name="Nakano K."/>
            <person name="Ninomiya N."/>
            <person name="Nishio T."/>
            <person name="Okada M."/>
            <person name="Plessy C."/>
            <person name="Shibata K."/>
            <person name="Shiraki T."/>
            <person name="Suzuki S."/>
            <person name="Tagami M."/>
            <person name="Waki K."/>
            <person name="Watahiki A."/>
            <person name="Okamura-Oho Y."/>
            <person name="Suzuki H."/>
            <person name="Kawai J."/>
            <person name="Hayashizaki Y."/>
        </authorList>
    </citation>
    <scope>NUCLEOTIDE SEQUENCE [LARGE SCALE MRNA]</scope>
    <source>
        <strain>C57BL/6J</strain>
        <tissue>Eye</tissue>
        <tissue>Heart</tissue>
    </source>
</reference>
<reference key="3">
    <citation type="journal article" date="2004" name="Genome Res.">
        <title>The status, quality, and expansion of the NIH full-length cDNA project: the Mammalian Gene Collection (MGC).</title>
        <authorList>
            <consortium name="The MGC Project Team"/>
        </authorList>
    </citation>
    <scope>NUCLEOTIDE SEQUENCE [LARGE SCALE MRNA]</scope>
    <source>
        <tissue>Retina</tissue>
    </source>
</reference>
<reference key="4">
    <citation type="journal article" date="1993" name="Mech. Dev.">
        <title>Prox 1, a prospero-related homeobox gene expressed during mouse development.</title>
        <authorList>
            <person name="Oliver G."/>
            <person name="Sosa-Pineda B."/>
            <person name="Geisendorf S."/>
            <person name="Spana E.P."/>
            <person name="Doe C.Q."/>
            <person name="Gruss P."/>
        </authorList>
    </citation>
    <scope>NUCLEOTIDE SEQUENCE [MRNA] OF 573-737</scope>
    <scope>TISSUE SPECIFICITY</scope>
</reference>
<reference key="5">
    <citation type="journal article" date="2007" name="Proc. Natl. Acad. Sci. U.S.A.">
        <title>Large-scale phosphorylation analysis of mouse liver.</title>
        <authorList>
            <person name="Villen J."/>
            <person name="Beausoleil S.A."/>
            <person name="Gerber S.A."/>
            <person name="Gygi S.P."/>
        </authorList>
    </citation>
    <scope>PHOSPHORYLATION [LARGE SCALE ANALYSIS] AT SER-179; SER-511 AND SER-514</scope>
    <scope>IDENTIFICATION BY MASS SPECTROMETRY [LARGE SCALE ANALYSIS]</scope>
    <source>
        <tissue>Liver</tissue>
    </source>
</reference>
<reference key="6">
    <citation type="journal article" date="2008" name="J. Proteome Res.">
        <title>Specific phosphopeptide enrichment with immobilized titanium ion affinity chromatography adsorbent for phosphoproteome analysis.</title>
        <authorList>
            <person name="Zhou H."/>
            <person name="Ye M."/>
            <person name="Dong J."/>
            <person name="Han G."/>
            <person name="Jiang X."/>
            <person name="Wu R."/>
            <person name="Zou H."/>
        </authorList>
    </citation>
    <scope>PHOSPHORYLATION [LARGE SCALE ANALYSIS] AT SER-511</scope>
    <scope>IDENTIFICATION BY MASS SPECTROMETRY [LARGE SCALE ANALYSIS]</scope>
    <source>
        <tissue>Liver</tissue>
    </source>
</reference>
<reference key="7">
    <citation type="journal article" date="2010" name="Cell">
        <title>A tissue-specific atlas of mouse protein phosphorylation and expression.</title>
        <authorList>
            <person name="Huttlin E.L."/>
            <person name="Jedrychowski M.P."/>
            <person name="Elias J.E."/>
            <person name="Goswami T."/>
            <person name="Rad R."/>
            <person name="Beausoleil S.A."/>
            <person name="Villen J."/>
            <person name="Haas W."/>
            <person name="Sowa M.E."/>
            <person name="Gygi S.P."/>
        </authorList>
    </citation>
    <scope>PHOSPHORYLATION [LARGE SCALE ANALYSIS] AT SER-179; SER-291; SER-295; SER-511 AND SER-514</scope>
    <scope>IDENTIFICATION BY MASS SPECTROMETRY [LARGE SCALE ANALYSIS]</scope>
    <source>
        <tissue>Brain</tissue>
        <tissue>Heart</tissue>
        <tissue>Kidney</tissue>
        <tissue>Liver</tissue>
        <tissue>Pancreas</tissue>
        <tissue>Spleen</tissue>
    </source>
</reference>
<reference key="8">
    <citation type="journal article" date="2012" name="Cancer Metastasis Rev.">
        <title>Transcription factor PROX1: its role in development and cancer.</title>
        <authorList>
            <person name="Elsir T."/>
            <person name="Smits A."/>
            <person name="Lindstroem M.S."/>
            <person name="Nister M."/>
        </authorList>
    </citation>
    <scope>REVIEW</scope>
</reference>
<reference key="9">
    <citation type="journal article" date="2013" name="Nucleic Acids Res.">
        <title>Prospero-related homeobox 1 (Prox1) functions as a novel modulator of retinoic acid-related orphan receptors alpha- and gamma-mediated transactivation.</title>
        <authorList>
            <person name="Takeda Y."/>
            <person name="Jetten A.M."/>
        </authorList>
    </citation>
    <scope>FUNCTION</scope>
    <scope>INDUCTION</scope>
    <scope>SUBCELLULAR LOCATION</scope>
    <scope>INTERACTION WITH RORA AND RORG</scope>
    <scope>DOMAIN</scope>
</reference>
<reference key="10">
    <citation type="journal article" date="2017" name="Circ. Res.">
        <title>Polydom Is an Extracellular Matrix Protein Involved in Lymphatic Vessel Remodeling.</title>
        <authorList>
            <person name="Morooka N."/>
            <person name="Futaki S."/>
            <person name="Sato-Nishiuchi R."/>
            <person name="Nishino M."/>
            <person name="Totani Y."/>
            <person name="Shimono C."/>
            <person name="Nakano I."/>
            <person name="Nakajima H."/>
            <person name="Mochizuki N."/>
            <person name="Sekiguchi K."/>
        </authorList>
    </citation>
    <scope>DEVELOPMENTAL STAGE</scope>
</reference>
<organism>
    <name type="scientific">Mus musculus</name>
    <name type="common">Mouse</name>
    <dbReference type="NCBI Taxonomy" id="10090"/>
    <lineage>
        <taxon>Eukaryota</taxon>
        <taxon>Metazoa</taxon>
        <taxon>Chordata</taxon>
        <taxon>Craniata</taxon>
        <taxon>Vertebrata</taxon>
        <taxon>Euteleostomi</taxon>
        <taxon>Mammalia</taxon>
        <taxon>Eutheria</taxon>
        <taxon>Euarchontoglires</taxon>
        <taxon>Glires</taxon>
        <taxon>Rodentia</taxon>
        <taxon>Myomorpha</taxon>
        <taxon>Muroidea</taxon>
        <taxon>Muridae</taxon>
        <taxon>Murinae</taxon>
        <taxon>Mus</taxon>
        <taxon>Mus</taxon>
    </lineage>
</organism>
<sequence>MPDHDSTALLSRQTKRRRVDIGVKRTVGTASAFFAKARATFFSAMNPQGSEQDVEYSVVQHADGEKSNVLRKLLKRANSYEDAMMPFPGATIISQLLKNNMNKNGGTEPSFQASGLSSTGSEVHQEDICSNSSRDSPPECLSPFGRPTMSQFDVDRLCDEHLRAKRARVENIIRGMSHSPSVALRGNENEREMAPQSVSPRESYRENKRKQKLPQQQQQSFQQLVSARKEQKREERRQLKQQLEDMQKQLRQLQEKFYQVYDSTDSENDEDGDLSEDSMRSEILDARAQDSVGRSDNEMCELDPGQFIDRARALIREQEMAENKPKREGSNKERDHGPNSLQPEGKHLAETLKQELNTAMSQVVDTVVKVFSAKPSRQVPQVFPPLQIPQARFAVNGENHNFHTANQRLQCFGDVIIPNPLDTFGSVQMPSSTDQTEALPLVVRKNSSEQSASGPATGGHHQPLHQSPLSATAGFTTPSFRHPFPLPLMAYPFQSPLGAPSGSFSGKDRASPESLDLTRDTTSLRTKMSSHHLSHHPCSPAHPPSTAEGLSLSLIKSECGDLQDMSDISPYSGSAMQEGLSPNHLKKAKLMFFYTRYPSSNMLKTYFSDVKFNRCITSQLIKWFSNFREFYYIQMEKYARQAINDGVTSTEELSITRDCELYRALNMHYNKANDFEVPERFLEVAQITLREFFNAIIAGKDVDPSWKKAIYKVICKLDSEVPEIFKSPNCLQELLHE</sequence>
<feature type="chain" id="PRO_0000208881" description="Prospero homeobox protein 1">
    <location>
        <begin position="1"/>
        <end position="737"/>
    </location>
</feature>
<feature type="domain" description="Prospero-type homeo" evidence="2">
    <location>
        <begin position="577"/>
        <end position="635"/>
    </location>
</feature>
<feature type="domain" description="Prospero" evidence="2">
    <location>
        <begin position="636"/>
        <end position="735"/>
    </location>
</feature>
<feature type="region of interest" description="Interaction with RORG" evidence="4">
    <location>
        <begin position="1"/>
        <end position="28"/>
    </location>
</feature>
<feature type="region of interest" description="Disordered" evidence="3">
    <location>
        <begin position="103"/>
        <end position="147"/>
    </location>
</feature>
<feature type="region of interest" description="Disordered" evidence="3">
    <location>
        <begin position="178"/>
        <end position="221"/>
    </location>
</feature>
<feature type="region of interest" description="Disordered" evidence="3">
    <location>
        <begin position="320"/>
        <end position="344"/>
    </location>
</feature>
<feature type="region of interest" description="Disordered" evidence="3">
    <location>
        <begin position="444"/>
        <end position="476"/>
    </location>
</feature>
<feature type="region of interest" description="Disordered" evidence="3">
    <location>
        <begin position="525"/>
        <end position="547"/>
    </location>
</feature>
<feature type="region of interest" description="Homeo-Prospero" evidence="2">
    <location>
        <begin position="577"/>
        <end position="735"/>
    </location>
</feature>
<feature type="region of interest" description="Essential for nuclear localization, interaction with RORG, repression of RORG transcriptional activator activity" evidence="4">
    <location>
        <begin position="723"/>
        <end position="729"/>
    </location>
</feature>
<feature type="compositionally biased region" description="Polar residues" evidence="3">
    <location>
        <begin position="103"/>
        <end position="135"/>
    </location>
</feature>
<feature type="compositionally biased region" description="Basic and acidic residues" evidence="3">
    <location>
        <begin position="320"/>
        <end position="337"/>
    </location>
</feature>
<feature type="compositionally biased region" description="Polar residues" evidence="3">
    <location>
        <begin position="464"/>
        <end position="476"/>
    </location>
</feature>
<feature type="modified residue" description="Phosphoserine" evidence="1">
    <location>
        <position position="177"/>
    </location>
</feature>
<feature type="modified residue" description="Phosphoserine" evidence="10 12">
    <location>
        <position position="179"/>
    </location>
</feature>
<feature type="modified residue" description="Phosphoserine" evidence="1">
    <location>
        <position position="199"/>
    </location>
</feature>
<feature type="modified residue" description="Phosphoserine" evidence="12">
    <location>
        <position position="291"/>
    </location>
</feature>
<feature type="modified residue" description="Phosphoserine" evidence="12">
    <location>
        <position position="295"/>
    </location>
</feature>
<feature type="modified residue" description="Phosphoserine" evidence="10 11 12">
    <location>
        <position position="511"/>
    </location>
</feature>
<feature type="modified residue" description="Phosphoserine" evidence="10 12">
    <location>
        <position position="514"/>
    </location>
</feature>
<feature type="modified residue" description="Phosphoserine" evidence="1">
    <location>
        <position position="557"/>
    </location>
</feature>
<feature type="cross-link" description="Glycyl lysine isopeptide (Lys-Gly) (interchain with G-Cter in SUMO2)" evidence="1">
    <location>
        <position position="324"/>
    </location>
</feature>
<feature type="sequence conflict" description="In Ref. 2; BAC35190." evidence="9" ref="2">
    <original>A</original>
    <variation>V</variation>
    <location>
        <position position="685"/>
    </location>
</feature>
<dbReference type="EMBL" id="AF061576">
    <property type="protein sequence ID" value="AAC32824.1"/>
    <property type="molecule type" value="mRNA"/>
</dbReference>
<dbReference type="EMBL" id="AK052889">
    <property type="protein sequence ID" value="BAC35190.1"/>
    <property type="molecule type" value="mRNA"/>
</dbReference>
<dbReference type="EMBL" id="AK143179">
    <property type="protein sequence ID" value="BAE25293.1"/>
    <property type="molecule type" value="mRNA"/>
</dbReference>
<dbReference type="EMBL" id="BC051411">
    <property type="protein sequence ID" value="AAH51411.1"/>
    <property type="molecule type" value="mRNA"/>
</dbReference>
<dbReference type="CCDS" id="CCDS35822.1"/>
<dbReference type="PIR" id="JE0269">
    <property type="entry name" value="JE0269"/>
</dbReference>
<dbReference type="RefSeq" id="NP_001347756.1">
    <property type="nucleotide sequence ID" value="NM_001360827.2"/>
</dbReference>
<dbReference type="RefSeq" id="NP_032963.1">
    <property type="nucleotide sequence ID" value="NM_008937.4"/>
</dbReference>
<dbReference type="RefSeq" id="XP_006497191.1">
    <property type="nucleotide sequence ID" value="XM_006497128.3"/>
</dbReference>
<dbReference type="RefSeq" id="XP_036018683.1">
    <property type="nucleotide sequence ID" value="XM_036162790.1"/>
</dbReference>
<dbReference type="BMRB" id="P48437"/>
<dbReference type="SMR" id="P48437"/>
<dbReference type="BioGRID" id="202396">
    <property type="interactions" value="6"/>
</dbReference>
<dbReference type="DIP" id="DIP-58960N"/>
<dbReference type="FunCoup" id="P48437">
    <property type="interactions" value="1932"/>
</dbReference>
<dbReference type="IntAct" id="P48437">
    <property type="interactions" value="2"/>
</dbReference>
<dbReference type="STRING" id="10090.ENSMUSP00000135703"/>
<dbReference type="iPTMnet" id="P48437"/>
<dbReference type="PhosphoSitePlus" id="P48437"/>
<dbReference type="jPOST" id="P48437"/>
<dbReference type="PaxDb" id="10090-ENSMUSP00000135703"/>
<dbReference type="PeptideAtlas" id="P48437"/>
<dbReference type="ProteomicsDB" id="291888"/>
<dbReference type="Antibodypedia" id="34616">
    <property type="antibodies" value="627 antibodies from 44 providers"/>
</dbReference>
<dbReference type="DNASU" id="19130"/>
<dbReference type="Ensembl" id="ENSMUST00000010319.14">
    <property type="protein sequence ID" value="ENSMUSP00000010319.8"/>
    <property type="gene ID" value="ENSMUSG00000010175.14"/>
</dbReference>
<dbReference type="Ensembl" id="ENSMUST00000175916.8">
    <property type="protein sequence ID" value="ENSMUSP00000135703.2"/>
    <property type="gene ID" value="ENSMUSG00000010175.14"/>
</dbReference>
<dbReference type="Ensembl" id="ENSMUST00000177288.4">
    <property type="protein sequence ID" value="ENSMUSP00000135066.2"/>
    <property type="gene ID" value="ENSMUSG00000010175.14"/>
</dbReference>
<dbReference type="GeneID" id="19130"/>
<dbReference type="KEGG" id="mmu:19130"/>
<dbReference type="UCSC" id="uc007ebc.2">
    <property type="organism name" value="mouse"/>
</dbReference>
<dbReference type="AGR" id="MGI:97772"/>
<dbReference type="CTD" id="5629"/>
<dbReference type="MGI" id="MGI:97772">
    <property type="gene designation" value="Prox1"/>
</dbReference>
<dbReference type="VEuPathDB" id="HostDB:ENSMUSG00000010175"/>
<dbReference type="eggNOG" id="KOG3779">
    <property type="taxonomic scope" value="Eukaryota"/>
</dbReference>
<dbReference type="GeneTree" id="ENSGT00940000154790"/>
<dbReference type="HOGENOM" id="CLU_016051_0_0_1"/>
<dbReference type="InParanoid" id="P48437"/>
<dbReference type="OMA" id="NGDNHNF"/>
<dbReference type="OrthoDB" id="10038576at2759"/>
<dbReference type="PhylomeDB" id="P48437"/>
<dbReference type="TreeFam" id="TF316638"/>
<dbReference type="BioGRID-ORCS" id="19130">
    <property type="hits" value="1 hit in 78 CRISPR screens"/>
</dbReference>
<dbReference type="ChiTaRS" id="Prox1">
    <property type="organism name" value="mouse"/>
</dbReference>
<dbReference type="PRO" id="PR:P48437"/>
<dbReference type="Proteomes" id="UP000000589">
    <property type="component" value="Chromosome 1"/>
</dbReference>
<dbReference type="RNAct" id="P48437">
    <property type="molecule type" value="protein"/>
</dbReference>
<dbReference type="Bgee" id="ENSMUSG00000010175">
    <property type="expression patterns" value="Expressed in lens of camera-type eye and 179 other cell types or tissues"/>
</dbReference>
<dbReference type="GO" id="GO:0005737">
    <property type="term" value="C:cytoplasm"/>
    <property type="evidence" value="ECO:0000314"/>
    <property type="project" value="BHF-UCL"/>
</dbReference>
<dbReference type="GO" id="GO:0005829">
    <property type="term" value="C:cytosol"/>
    <property type="evidence" value="ECO:0007669"/>
    <property type="project" value="Ensembl"/>
</dbReference>
<dbReference type="GO" id="GO:0005654">
    <property type="term" value="C:nucleoplasm"/>
    <property type="evidence" value="ECO:0007669"/>
    <property type="project" value="Ensembl"/>
</dbReference>
<dbReference type="GO" id="GO:0005634">
    <property type="term" value="C:nucleus"/>
    <property type="evidence" value="ECO:0000314"/>
    <property type="project" value="UniProtKB"/>
</dbReference>
<dbReference type="GO" id="GO:0050692">
    <property type="term" value="F:DNA binding domain binding"/>
    <property type="evidence" value="ECO:0007669"/>
    <property type="project" value="Ensembl"/>
</dbReference>
<dbReference type="GO" id="GO:0003700">
    <property type="term" value="F:DNA-binding transcription factor activity"/>
    <property type="evidence" value="ECO:0000303"/>
    <property type="project" value="BHF-UCL"/>
</dbReference>
<dbReference type="GO" id="GO:0000981">
    <property type="term" value="F:DNA-binding transcription factor activity, RNA polymerase II-specific"/>
    <property type="evidence" value="ECO:0000314"/>
    <property type="project" value="BHF-UCL"/>
</dbReference>
<dbReference type="GO" id="GO:0001227">
    <property type="term" value="F:DNA-binding transcription repressor activity, RNA polymerase II-specific"/>
    <property type="evidence" value="ECO:0007669"/>
    <property type="project" value="Ensembl"/>
</dbReference>
<dbReference type="GO" id="GO:0050693">
    <property type="term" value="F:LBD domain binding"/>
    <property type="evidence" value="ECO:0007669"/>
    <property type="project" value="Ensembl"/>
</dbReference>
<dbReference type="GO" id="GO:0016922">
    <property type="term" value="F:nuclear receptor binding"/>
    <property type="evidence" value="ECO:0007669"/>
    <property type="project" value="Ensembl"/>
</dbReference>
<dbReference type="GO" id="GO:0000978">
    <property type="term" value="F:RNA polymerase II cis-regulatory region sequence-specific DNA binding"/>
    <property type="evidence" value="ECO:0000314"/>
    <property type="project" value="UniProtKB"/>
</dbReference>
<dbReference type="GO" id="GO:0043565">
    <property type="term" value="F:sequence-specific DNA binding"/>
    <property type="evidence" value="ECO:0000314"/>
    <property type="project" value="MGI"/>
</dbReference>
<dbReference type="GO" id="GO:0090425">
    <property type="term" value="P:acinar cell differentiation"/>
    <property type="evidence" value="ECO:0000315"/>
    <property type="project" value="MGI"/>
</dbReference>
<dbReference type="GO" id="GO:0060414">
    <property type="term" value="P:aorta smooth muscle tissue morphogenesis"/>
    <property type="evidence" value="ECO:0000315"/>
    <property type="project" value="BHF-UCL"/>
</dbReference>
<dbReference type="GO" id="GO:0055009">
    <property type="term" value="P:atrial cardiac muscle tissue morphogenesis"/>
    <property type="evidence" value="ECO:0000315"/>
    <property type="project" value="BHF-UCL"/>
</dbReference>
<dbReference type="GO" id="GO:0060837">
    <property type="term" value="P:blood vessel endothelial cell differentiation"/>
    <property type="evidence" value="ECO:0000315"/>
    <property type="project" value="MGI"/>
</dbReference>
<dbReference type="GO" id="GO:0061114">
    <property type="term" value="P:branching involved in pancreas morphogenesis"/>
    <property type="evidence" value="ECO:0000315"/>
    <property type="project" value="MGI"/>
</dbReference>
<dbReference type="GO" id="GO:0008283">
    <property type="term" value="P:cell population proliferation"/>
    <property type="evidence" value="ECO:0000315"/>
    <property type="project" value="MGI"/>
</dbReference>
<dbReference type="GO" id="GO:0021707">
    <property type="term" value="P:cerebellar granule cell differentiation"/>
    <property type="evidence" value="ECO:0000315"/>
    <property type="project" value="BHF-UCL"/>
</dbReference>
<dbReference type="GO" id="GO:0007623">
    <property type="term" value="P:circadian rhythm"/>
    <property type="evidence" value="ECO:0000270"/>
    <property type="project" value="UniProtKB"/>
</dbReference>
<dbReference type="GO" id="GO:0021542">
    <property type="term" value="P:dentate gyrus development"/>
    <property type="evidence" value="ECO:0000315"/>
    <property type="project" value="BHF-UCL"/>
</dbReference>
<dbReference type="GO" id="GO:0060059">
    <property type="term" value="P:embryonic retina morphogenesis in camera-type eye"/>
    <property type="evidence" value="ECO:0000270"/>
    <property type="project" value="BHF-UCL"/>
</dbReference>
<dbReference type="GO" id="GO:0060214">
    <property type="term" value="P:endocardium formation"/>
    <property type="evidence" value="ECO:0000315"/>
    <property type="project" value="BHF-UCL"/>
</dbReference>
<dbReference type="GO" id="GO:0010631">
    <property type="term" value="P:epithelial cell migration"/>
    <property type="evidence" value="ECO:0000315"/>
    <property type="project" value="MGI"/>
</dbReference>
<dbReference type="GO" id="GO:0002194">
    <property type="term" value="P:hepatocyte cell migration"/>
    <property type="evidence" value="ECO:0000315"/>
    <property type="project" value="MGI"/>
</dbReference>
<dbReference type="GO" id="GO:0070365">
    <property type="term" value="P:hepatocyte differentiation"/>
    <property type="evidence" value="ECO:0000270"/>
    <property type="project" value="BHF-UCL"/>
</dbReference>
<dbReference type="GO" id="GO:0072574">
    <property type="term" value="P:hepatocyte proliferation"/>
    <property type="evidence" value="ECO:0000315"/>
    <property type="project" value="MGI"/>
</dbReference>
<dbReference type="GO" id="GO:0048839">
    <property type="term" value="P:inner ear development"/>
    <property type="evidence" value="ECO:0000315"/>
    <property type="project" value="MGI"/>
</dbReference>
<dbReference type="GO" id="GO:0001822">
    <property type="term" value="P:kidney development"/>
    <property type="evidence" value="ECO:0007669"/>
    <property type="project" value="Ensembl"/>
</dbReference>
<dbReference type="GO" id="GO:0070309">
    <property type="term" value="P:lens fiber cell morphogenesis"/>
    <property type="evidence" value="ECO:0000315"/>
    <property type="project" value="BHF-UCL"/>
</dbReference>
<dbReference type="GO" id="GO:0002089">
    <property type="term" value="P:lens morphogenesis in camera-type eye"/>
    <property type="evidence" value="ECO:0000315"/>
    <property type="project" value="BHF-UCL"/>
</dbReference>
<dbReference type="GO" id="GO:0046619">
    <property type="term" value="P:lens placode formation involved in camera-type eye formation"/>
    <property type="evidence" value="ECO:0000270"/>
    <property type="project" value="BHF-UCL"/>
</dbReference>
<dbReference type="GO" id="GO:0030324">
    <property type="term" value="P:lung development"/>
    <property type="evidence" value="ECO:0007669"/>
    <property type="project" value="Ensembl"/>
</dbReference>
<dbReference type="GO" id="GO:0001945">
    <property type="term" value="P:lymph vessel development"/>
    <property type="evidence" value="ECO:0000315"/>
    <property type="project" value="MGI"/>
</dbReference>
<dbReference type="GO" id="GO:0001946">
    <property type="term" value="P:lymphangiogenesis"/>
    <property type="evidence" value="ECO:0007669"/>
    <property type="project" value="Ensembl"/>
</dbReference>
<dbReference type="GO" id="GO:0060836">
    <property type="term" value="P:lymphatic endothelial cell differentiation"/>
    <property type="evidence" value="ECO:0000315"/>
    <property type="project" value="MGI"/>
</dbReference>
<dbReference type="GO" id="GO:0060838">
    <property type="term" value="P:lymphatic endothelial cell fate commitment"/>
    <property type="evidence" value="ECO:0007669"/>
    <property type="project" value="Ensembl"/>
</dbReference>
<dbReference type="GO" id="GO:0070858">
    <property type="term" value="P:negative regulation of bile acid biosynthetic process"/>
    <property type="evidence" value="ECO:0007669"/>
    <property type="project" value="Ensembl"/>
</dbReference>
<dbReference type="GO" id="GO:0045892">
    <property type="term" value="P:negative regulation of DNA-templated transcription"/>
    <property type="evidence" value="ECO:0000314"/>
    <property type="project" value="UniProtKB"/>
</dbReference>
<dbReference type="GO" id="GO:0007406">
    <property type="term" value="P:negative regulation of neuroblast proliferation"/>
    <property type="evidence" value="ECO:0000315"/>
    <property type="project" value="MGI"/>
</dbReference>
<dbReference type="GO" id="GO:0000122">
    <property type="term" value="P:negative regulation of transcription by RNA polymerase II"/>
    <property type="evidence" value="ECO:0000314"/>
    <property type="project" value="MGI"/>
</dbReference>
<dbReference type="GO" id="GO:0045071">
    <property type="term" value="P:negative regulation of viral genome replication"/>
    <property type="evidence" value="ECO:0007669"/>
    <property type="project" value="Ensembl"/>
</dbReference>
<dbReference type="GO" id="GO:0007405">
    <property type="term" value="P:neuroblast proliferation"/>
    <property type="evidence" value="ECO:0000315"/>
    <property type="project" value="MGI"/>
</dbReference>
<dbReference type="GO" id="GO:0048664">
    <property type="term" value="P:neuron fate determination"/>
    <property type="evidence" value="ECO:0000315"/>
    <property type="project" value="MGI"/>
</dbReference>
<dbReference type="GO" id="GO:0097150">
    <property type="term" value="P:neuronal stem cell population maintenance"/>
    <property type="evidence" value="ECO:0000315"/>
    <property type="project" value="BHF-UCL"/>
</dbReference>
<dbReference type="GO" id="GO:0045787">
    <property type="term" value="P:positive regulation of cell cycle"/>
    <property type="evidence" value="ECO:0000315"/>
    <property type="project" value="BHF-UCL"/>
</dbReference>
<dbReference type="GO" id="GO:1901978">
    <property type="term" value="P:positive regulation of cell cycle checkpoint"/>
    <property type="evidence" value="ECO:0000315"/>
    <property type="project" value="MGI"/>
</dbReference>
<dbReference type="GO" id="GO:0008284">
    <property type="term" value="P:positive regulation of cell population proliferation"/>
    <property type="evidence" value="ECO:0000315"/>
    <property type="project" value="BHF-UCL"/>
</dbReference>
<dbReference type="GO" id="GO:0010595">
    <property type="term" value="P:positive regulation of endothelial cell migration"/>
    <property type="evidence" value="ECO:0007669"/>
    <property type="project" value="Ensembl"/>
</dbReference>
<dbReference type="GO" id="GO:0001938">
    <property type="term" value="P:positive regulation of endothelial cell proliferation"/>
    <property type="evidence" value="ECO:0007669"/>
    <property type="project" value="Ensembl"/>
</dbReference>
<dbReference type="GO" id="GO:2000979">
    <property type="term" value="P:positive regulation of forebrain neuron differentiation"/>
    <property type="evidence" value="ECO:0000315"/>
    <property type="project" value="BHF-UCL"/>
</dbReference>
<dbReference type="GO" id="GO:0060421">
    <property type="term" value="P:positive regulation of heart growth"/>
    <property type="evidence" value="ECO:0000315"/>
    <property type="project" value="BHF-UCL"/>
</dbReference>
<dbReference type="GO" id="GO:2000179">
    <property type="term" value="P:positive regulation of neural precursor cell proliferation"/>
    <property type="evidence" value="ECO:0000315"/>
    <property type="project" value="BHF-UCL"/>
</dbReference>
<dbReference type="GO" id="GO:0060298">
    <property type="term" value="P:positive regulation of sarcomere organization"/>
    <property type="evidence" value="ECO:0000315"/>
    <property type="project" value="BHF-UCL"/>
</dbReference>
<dbReference type="GO" id="GO:0045944">
    <property type="term" value="P:positive regulation of transcription by RNA polymerase II"/>
    <property type="evidence" value="ECO:0000314"/>
    <property type="project" value="MGI"/>
</dbReference>
<dbReference type="GO" id="GO:0042752">
    <property type="term" value="P:regulation of circadian rhythm"/>
    <property type="evidence" value="ECO:0000250"/>
    <property type="project" value="UniProtKB"/>
</dbReference>
<dbReference type="GO" id="GO:0010468">
    <property type="term" value="P:regulation of gene expression"/>
    <property type="evidence" value="ECO:0000315"/>
    <property type="project" value="BHF-UCL"/>
</dbReference>
<dbReference type="GO" id="GO:0031667">
    <property type="term" value="P:response to nutrient levels"/>
    <property type="evidence" value="ECO:0007669"/>
    <property type="project" value="Ensembl"/>
</dbReference>
<dbReference type="GO" id="GO:0030240">
    <property type="term" value="P:skeletal muscle thin filament assembly"/>
    <property type="evidence" value="ECO:0000315"/>
    <property type="project" value="BHF-UCL"/>
</dbReference>
<dbReference type="GO" id="GO:0006366">
    <property type="term" value="P:transcription by RNA polymerase II"/>
    <property type="evidence" value="ECO:0000314"/>
    <property type="project" value="MGI"/>
</dbReference>
<dbReference type="GO" id="GO:0048845">
    <property type="term" value="P:venous blood vessel morphogenesis"/>
    <property type="evidence" value="ECO:0000315"/>
    <property type="project" value="BHF-UCL"/>
</dbReference>
<dbReference type="GO" id="GO:0055010">
    <property type="term" value="P:ventricular cardiac muscle tissue morphogenesis"/>
    <property type="evidence" value="ECO:0000315"/>
    <property type="project" value="BHF-UCL"/>
</dbReference>
<dbReference type="GO" id="GO:0055005">
    <property type="term" value="P:ventricular cardiac myofibril assembly"/>
    <property type="evidence" value="ECO:0000315"/>
    <property type="project" value="BHF-UCL"/>
</dbReference>
<dbReference type="GO" id="GO:0060412">
    <property type="term" value="P:ventricular septum morphogenesis"/>
    <property type="evidence" value="ECO:0000315"/>
    <property type="project" value="BHF-UCL"/>
</dbReference>
<dbReference type="FunFam" id="1.10.10.500:FF:000001">
    <property type="entry name" value="Prospero homeobox protein 1"/>
    <property type="match status" value="1"/>
</dbReference>
<dbReference type="Gene3D" id="1.10.10.500">
    <property type="entry name" value="Homeo-prospero domain"/>
    <property type="match status" value="1"/>
</dbReference>
<dbReference type="InterPro" id="IPR023082">
    <property type="entry name" value="Homeo_prospero_dom"/>
</dbReference>
<dbReference type="InterPro" id="IPR037131">
    <property type="entry name" value="Homeo_prospero_dom_sf"/>
</dbReference>
<dbReference type="InterPro" id="IPR009057">
    <property type="entry name" value="Homeodomain-like_sf"/>
</dbReference>
<dbReference type="InterPro" id="IPR039350">
    <property type="entry name" value="Prospero_homeodomain"/>
</dbReference>
<dbReference type="PANTHER" id="PTHR12198">
    <property type="entry name" value="HOMEOBOX PROTEIN PROSPERO/PROX-1/CEH-26"/>
    <property type="match status" value="1"/>
</dbReference>
<dbReference type="PANTHER" id="PTHR12198:SF6">
    <property type="entry name" value="PROSPERO HOMEOBOX PROTEIN 1"/>
    <property type="match status" value="1"/>
</dbReference>
<dbReference type="Pfam" id="PF05044">
    <property type="entry name" value="HPD"/>
    <property type="match status" value="1"/>
</dbReference>
<dbReference type="SUPFAM" id="SSF46689">
    <property type="entry name" value="Homeodomain-like"/>
    <property type="match status" value="1"/>
</dbReference>
<dbReference type="PROSITE" id="PS51818">
    <property type="entry name" value="HOMEO_PROSPERO"/>
    <property type="match status" value="1"/>
</dbReference>
<keyword id="KW-0090">Biological rhythms</keyword>
<keyword id="KW-0217">Developmental protein</keyword>
<keyword id="KW-0238">DNA-binding</keyword>
<keyword id="KW-0371">Homeobox</keyword>
<keyword id="KW-1017">Isopeptide bond</keyword>
<keyword id="KW-0539">Nucleus</keyword>
<keyword id="KW-0597">Phosphoprotein</keyword>
<keyword id="KW-1185">Reference proteome</keyword>
<keyword id="KW-0678">Repressor</keyword>
<keyword id="KW-0804">Transcription</keyword>
<keyword id="KW-0805">Transcription regulation</keyword>
<keyword id="KW-0832">Ubl conjugation</keyword>
<comment type="function">
    <text evidence="4 8">Transcription factor involved in developmental processes such as cell fate determination, gene transcriptional regulation and progenitor cell regulation in a number of organs. Plays a critical role in embryonic development and functions as a key regulatory protein in neurogenesis and the development of the heart, eye lens, liver, pancreas and the lymphatic system. Involved in the regulation of the circadian rhythm. Represses: transcription of the retinoid-related orphan receptor RORG, transcriptional activator activity of RORA and RORG and the expression of RORA/G-target genes including core clock components: BMAL1, NPAS2 and CRY1 and metabolic genes: AVPR1A and ELOVL3.</text>
</comment>
<comment type="subunit">
    <text evidence="4">Interacts with RORA and RORG (via AF-2 motif).</text>
</comment>
<comment type="subcellular location">
    <subcellularLocation>
        <location evidence="4">Nucleus</location>
    </subcellularLocation>
    <text evidence="4">RORG promotes its nuclear localization.</text>
</comment>
<comment type="tissue specificity">
    <text evidence="6 7">Expressed in the young neurons of the subventricular region of the CNS, developing eye lens and pancreas. It is also found in the developing liver, heart and skeletal muscle. In the eye, expressed in the lens and retina at postnatal day 10. In the retina, localized to the inner nuclear layer. In the lens, localized to epithelial and fiber cells.</text>
</comment>
<comment type="developmental stage">
    <text evidence="5">Expressed in mesenteric lymphatic endothelial cells at 16.5 dpc, expression is reduced after this point apart from in the lymphatic valve region where expression remains strong at 18.5 dpc (at protein level).</text>
</comment>
<comment type="induction">
    <text evidence="4">Expressed in a circadian manner in the liver with a peak at ZT4.</text>
</comment>
<comment type="domain">
    <text evidence="2 4">The Prospero-type homeodomain and the adjacent Prospero domain act as a single structural unit, the Homeo-Prospero domain (Potential). The Prospero-type homeodomain is essential for repression of RORG transcriptional activator activity (PubMed:23723244).</text>
</comment>
<comment type="similarity">
    <text evidence="2">Belongs to the Prospero homeodomain family.</text>
</comment>
<proteinExistence type="evidence at protein level"/>
<protein>
    <recommendedName>
        <fullName>Prospero homeobox protein 1</fullName>
    </recommendedName>
    <alternativeName>
        <fullName>Homeobox prospero-like protein PROX1</fullName>
        <shortName>PROX-1</shortName>
    </alternativeName>
</protein>
<evidence type="ECO:0000250" key="1">
    <source>
        <dbReference type="UniProtKB" id="Q92786"/>
    </source>
</evidence>
<evidence type="ECO:0000255" key="2">
    <source>
        <dbReference type="PROSITE-ProRule" id="PRU01162"/>
    </source>
</evidence>
<evidence type="ECO:0000256" key="3">
    <source>
        <dbReference type="SAM" id="MobiDB-lite"/>
    </source>
</evidence>
<evidence type="ECO:0000269" key="4">
    <source>
    </source>
</evidence>
<evidence type="ECO:0000269" key="5">
    <source>
    </source>
</evidence>
<evidence type="ECO:0000269" key="6">
    <source>
    </source>
</evidence>
<evidence type="ECO:0000269" key="7">
    <source>
    </source>
</evidence>
<evidence type="ECO:0000303" key="8">
    <source>
    </source>
</evidence>
<evidence type="ECO:0000305" key="9"/>
<evidence type="ECO:0007744" key="10">
    <source>
    </source>
</evidence>
<evidence type="ECO:0007744" key="11">
    <source>
    </source>
</evidence>
<evidence type="ECO:0007744" key="12">
    <source>
    </source>
</evidence>